<proteinExistence type="inferred from homology"/>
<keyword id="KW-0030">Aminoacyl-tRNA synthetase</keyword>
<keyword id="KW-0067">ATP-binding</keyword>
<keyword id="KW-0963">Cytoplasm</keyword>
<keyword id="KW-0436">Ligase</keyword>
<keyword id="KW-0547">Nucleotide-binding</keyword>
<keyword id="KW-0648">Protein biosynthesis</keyword>
<organism>
    <name type="scientific">Streptococcus pyogenes serotype M2 (strain MGAS10270)</name>
    <dbReference type="NCBI Taxonomy" id="370552"/>
    <lineage>
        <taxon>Bacteria</taxon>
        <taxon>Bacillati</taxon>
        <taxon>Bacillota</taxon>
        <taxon>Bacilli</taxon>
        <taxon>Lactobacillales</taxon>
        <taxon>Streptococcaceae</taxon>
        <taxon>Streptococcus</taxon>
    </lineage>
</organism>
<feature type="chain" id="PRO_0000248783" description="Proline--tRNA ligase">
    <location>
        <begin position="1"/>
        <end position="618"/>
    </location>
</feature>
<dbReference type="EC" id="6.1.1.15" evidence="1"/>
<dbReference type="EMBL" id="CP000260">
    <property type="protein sequence ID" value="ABF34806.1"/>
    <property type="molecule type" value="Genomic_DNA"/>
</dbReference>
<dbReference type="SMR" id="Q1JEV3"/>
<dbReference type="KEGG" id="sph:MGAS10270_Spy1741"/>
<dbReference type="HOGENOM" id="CLU_016739_0_0_9"/>
<dbReference type="Proteomes" id="UP000002436">
    <property type="component" value="Chromosome"/>
</dbReference>
<dbReference type="GO" id="GO:0005829">
    <property type="term" value="C:cytosol"/>
    <property type="evidence" value="ECO:0007669"/>
    <property type="project" value="TreeGrafter"/>
</dbReference>
<dbReference type="GO" id="GO:0002161">
    <property type="term" value="F:aminoacyl-tRNA deacylase activity"/>
    <property type="evidence" value="ECO:0007669"/>
    <property type="project" value="InterPro"/>
</dbReference>
<dbReference type="GO" id="GO:0005524">
    <property type="term" value="F:ATP binding"/>
    <property type="evidence" value="ECO:0007669"/>
    <property type="project" value="UniProtKB-UniRule"/>
</dbReference>
<dbReference type="GO" id="GO:0140096">
    <property type="term" value="F:catalytic activity, acting on a protein"/>
    <property type="evidence" value="ECO:0007669"/>
    <property type="project" value="UniProtKB-ARBA"/>
</dbReference>
<dbReference type="GO" id="GO:0004827">
    <property type="term" value="F:proline-tRNA ligase activity"/>
    <property type="evidence" value="ECO:0007669"/>
    <property type="project" value="UniProtKB-UniRule"/>
</dbReference>
<dbReference type="GO" id="GO:0016740">
    <property type="term" value="F:transferase activity"/>
    <property type="evidence" value="ECO:0007669"/>
    <property type="project" value="UniProtKB-ARBA"/>
</dbReference>
<dbReference type="GO" id="GO:0006433">
    <property type="term" value="P:prolyl-tRNA aminoacylation"/>
    <property type="evidence" value="ECO:0007669"/>
    <property type="project" value="UniProtKB-UniRule"/>
</dbReference>
<dbReference type="CDD" id="cd04334">
    <property type="entry name" value="ProRS-INS"/>
    <property type="match status" value="1"/>
</dbReference>
<dbReference type="CDD" id="cd00861">
    <property type="entry name" value="ProRS_anticodon_short"/>
    <property type="match status" value="1"/>
</dbReference>
<dbReference type="FunFam" id="3.40.50.800:FF:000011">
    <property type="entry name" value="Proline--tRNA ligase"/>
    <property type="match status" value="1"/>
</dbReference>
<dbReference type="Gene3D" id="3.40.50.800">
    <property type="entry name" value="Anticodon-binding domain"/>
    <property type="match status" value="1"/>
</dbReference>
<dbReference type="Gene3D" id="3.30.930.10">
    <property type="entry name" value="Bira Bifunctional Protein, Domain 2"/>
    <property type="match status" value="2"/>
</dbReference>
<dbReference type="Gene3D" id="3.90.960.10">
    <property type="entry name" value="YbaK/aminoacyl-tRNA synthetase-associated domain"/>
    <property type="match status" value="1"/>
</dbReference>
<dbReference type="HAMAP" id="MF_01569">
    <property type="entry name" value="Pro_tRNA_synth_type1"/>
    <property type="match status" value="1"/>
</dbReference>
<dbReference type="InterPro" id="IPR002314">
    <property type="entry name" value="aa-tRNA-synt_IIb"/>
</dbReference>
<dbReference type="InterPro" id="IPR006195">
    <property type="entry name" value="aa-tRNA-synth_II"/>
</dbReference>
<dbReference type="InterPro" id="IPR045864">
    <property type="entry name" value="aa-tRNA-synth_II/BPL/LPL"/>
</dbReference>
<dbReference type="InterPro" id="IPR004154">
    <property type="entry name" value="Anticodon-bd"/>
</dbReference>
<dbReference type="InterPro" id="IPR036621">
    <property type="entry name" value="Anticodon-bd_dom_sf"/>
</dbReference>
<dbReference type="InterPro" id="IPR002316">
    <property type="entry name" value="Pro-tRNA-ligase_IIa"/>
</dbReference>
<dbReference type="InterPro" id="IPR004500">
    <property type="entry name" value="Pro-tRNA-synth_IIa_bac-type"/>
</dbReference>
<dbReference type="InterPro" id="IPR023717">
    <property type="entry name" value="Pro-tRNA-Synthase_IIa_type1"/>
</dbReference>
<dbReference type="InterPro" id="IPR050062">
    <property type="entry name" value="Pro-tRNA_synthetase"/>
</dbReference>
<dbReference type="InterPro" id="IPR044140">
    <property type="entry name" value="ProRS_anticodon_short"/>
</dbReference>
<dbReference type="InterPro" id="IPR036754">
    <property type="entry name" value="YbaK/aa-tRNA-synt-asso_dom_sf"/>
</dbReference>
<dbReference type="InterPro" id="IPR007214">
    <property type="entry name" value="YbaK/aa-tRNA-synth-assoc-dom"/>
</dbReference>
<dbReference type="NCBIfam" id="NF006625">
    <property type="entry name" value="PRK09194.1"/>
    <property type="match status" value="1"/>
</dbReference>
<dbReference type="NCBIfam" id="TIGR00409">
    <property type="entry name" value="proS_fam_II"/>
    <property type="match status" value="2"/>
</dbReference>
<dbReference type="PANTHER" id="PTHR42753">
    <property type="entry name" value="MITOCHONDRIAL RIBOSOME PROTEIN L39/PROLYL-TRNA LIGASE FAMILY MEMBER"/>
    <property type="match status" value="1"/>
</dbReference>
<dbReference type="PANTHER" id="PTHR42753:SF2">
    <property type="entry name" value="PROLINE--TRNA LIGASE"/>
    <property type="match status" value="1"/>
</dbReference>
<dbReference type="Pfam" id="PF03129">
    <property type="entry name" value="HGTP_anticodon"/>
    <property type="match status" value="1"/>
</dbReference>
<dbReference type="Pfam" id="PF00587">
    <property type="entry name" value="tRNA-synt_2b"/>
    <property type="match status" value="1"/>
</dbReference>
<dbReference type="Pfam" id="PF04073">
    <property type="entry name" value="tRNA_edit"/>
    <property type="match status" value="1"/>
</dbReference>
<dbReference type="PRINTS" id="PR01046">
    <property type="entry name" value="TRNASYNTHPRO"/>
</dbReference>
<dbReference type="SUPFAM" id="SSF52954">
    <property type="entry name" value="Class II aaRS ABD-related"/>
    <property type="match status" value="1"/>
</dbReference>
<dbReference type="SUPFAM" id="SSF55681">
    <property type="entry name" value="Class II aaRS and biotin synthetases"/>
    <property type="match status" value="1"/>
</dbReference>
<dbReference type="SUPFAM" id="SSF55826">
    <property type="entry name" value="YbaK/ProRS associated domain"/>
    <property type="match status" value="1"/>
</dbReference>
<dbReference type="PROSITE" id="PS50862">
    <property type="entry name" value="AA_TRNA_LIGASE_II"/>
    <property type="match status" value="1"/>
</dbReference>
<protein>
    <recommendedName>
        <fullName evidence="1">Proline--tRNA ligase</fullName>
        <ecNumber evidence="1">6.1.1.15</ecNumber>
    </recommendedName>
    <alternativeName>
        <fullName evidence="1">Prolyl-tRNA synthetase</fullName>
        <shortName evidence="1">ProRS</shortName>
    </alternativeName>
</protein>
<accession>Q1JEV3</accession>
<comment type="function">
    <text evidence="1">Catalyzes the attachment of proline to tRNA(Pro) in a two-step reaction: proline is first activated by ATP to form Pro-AMP and then transferred to the acceptor end of tRNA(Pro). As ProRS can inadvertently accommodate and process non-cognate amino acids such as alanine and cysteine, to avoid such errors it has two additional distinct editing activities against alanine. One activity is designated as 'pretransfer' editing and involves the tRNA(Pro)-independent hydrolysis of activated Ala-AMP. The other activity is designated 'posttransfer' editing and involves deacylation of mischarged Ala-tRNA(Pro). The misacylated Cys-tRNA(Pro) is not edited by ProRS.</text>
</comment>
<comment type="catalytic activity">
    <reaction evidence="1">
        <text>tRNA(Pro) + L-proline + ATP = L-prolyl-tRNA(Pro) + AMP + diphosphate</text>
        <dbReference type="Rhea" id="RHEA:14305"/>
        <dbReference type="Rhea" id="RHEA-COMP:9700"/>
        <dbReference type="Rhea" id="RHEA-COMP:9702"/>
        <dbReference type="ChEBI" id="CHEBI:30616"/>
        <dbReference type="ChEBI" id="CHEBI:33019"/>
        <dbReference type="ChEBI" id="CHEBI:60039"/>
        <dbReference type="ChEBI" id="CHEBI:78442"/>
        <dbReference type="ChEBI" id="CHEBI:78532"/>
        <dbReference type="ChEBI" id="CHEBI:456215"/>
        <dbReference type="EC" id="6.1.1.15"/>
    </reaction>
</comment>
<comment type="subunit">
    <text evidence="1">Homodimer.</text>
</comment>
<comment type="subcellular location">
    <subcellularLocation>
        <location evidence="1">Cytoplasm</location>
    </subcellularLocation>
</comment>
<comment type="domain">
    <text evidence="1">Consists of three domains: the N-terminal catalytic domain, the editing domain and the C-terminal anticodon-binding domain.</text>
</comment>
<comment type="similarity">
    <text evidence="1">Belongs to the class-II aminoacyl-tRNA synthetase family. ProS type 1 subfamily.</text>
</comment>
<name>SYP_STRPD</name>
<sequence>MKQSKLLIPTLREMPSDAQVISHALMVRAGYVRQVSAGIYAYLPLANRTIEKFKTIMREEFEKIGAVEMLAPALLTADLWRESGRYETYGEDLYKLKNRDNSDFILGPTHEETFTTLVRDAVKSYKQLPLNLYQIQSKYRDEKRPRNGLLRTREFIMKDGYSFHHNYEDLDVTYEDYRQAYEAIFTRAGLDFKGIIGDGGAMGGKDSQEFMAITPARTDLDRWVVLDKSIASMDAIPKEVLEEIKAELAAWMISGEDTIAYSTESSYAANLEMATNEYKPSSKVAAEDALAEVETPHCKTIDEVAAFLSVDETQTIKTLLFVADNEPVVALLVGNDHINTVKLKNYLAADFLEPASEEEARAFFGAGFGSLGPVNLAQGSRIVADRKVQNLTNAVAGANKDGFHVTGVNPGRDFQAEYVDIREVKEGEISPDGHGVLQFARGIEVGHIFKLGTRYSDSMGATILDENSRAVPIVMGCYGIGVSRILSAVIEQHARLFVNKTPKGDYRYAWGINFPKELAPFDVHLITVNVKDQVAQDLTAKLEADLMAKGYDVLTDDRNERVGSKFSDSDLIGLPIRVTVGKKAAEGIVEIKIKATGDSIEVNAENLIETLEILTKEH</sequence>
<gene>
    <name evidence="1" type="primary">proS</name>
    <name type="ordered locus">MGAS10270_Spy1741</name>
</gene>
<reference key="1">
    <citation type="journal article" date="2006" name="Proc. Natl. Acad. Sci. U.S.A.">
        <title>Molecular genetic anatomy of inter- and intraserotype variation in the human bacterial pathogen group A Streptococcus.</title>
        <authorList>
            <person name="Beres S.B."/>
            <person name="Richter E.W."/>
            <person name="Nagiec M.J."/>
            <person name="Sumby P."/>
            <person name="Porcella S.F."/>
            <person name="DeLeo F.R."/>
            <person name="Musser J.M."/>
        </authorList>
    </citation>
    <scope>NUCLEOTIDE SEQUENCE [LARGE SCALE GENOMIC DNA]</scope>
    <source>
        <strain>MGAS10270</strain>
    </source>
</reference>
<evidence type="ECO:0000255" key="1">
    <source>
        <dbReference type="HAMAP-Rule" id="MF_01569"/>
    </source>
</evidence>